<evidence type="ECO:0000255" key="1">
    <source>
        <dbReference type="HAMAP-Rule" id="MF_01043"/>
    </source>
</evidence>
<name>PLSY_DECAR</name>
<protein>
    <recommendedName>
        <fullName evidence="1">Glycerol-3-phosphate acyltransferase</fullName>
    </recommendedName>
    <alternativeName>
        <fullName evidence="1">Acyl-PO4 G3P acyltransferase</fullName>
    </alternativeName>
    <alternativeName>
        <fullName evidence="1">Acyl-phosphate--glycerol-3-phosphate acyltransferase</fullName>
    </alternativeName>
    <alternativeName>
        <fullName evidence="1">G3P acyltransferase</fullName>
        <shortName evidence="1">GPAT</shortName>
        <ecNumber evidence="1">2.3.1.275</ecNumber>
    </alternativeName>
    <alternativeName>
        <fullName evidence="1">Lysophosphatidic acid synthase</fullName>
        <shortName evidence="1">LPA synthase</shortName>
    </alternativeName>
</protein>
<comment type="function">
    <text evidence="1">Catalyzes the transfer of an acyl group from acyl-phosphate (acyl-PO(4)) to glycerol-3-phosphate (G3P) to form lysophosphatidic acid (LPA). This enzyme utilizes acyl-phosphate as fatty acyl donor, but not acyl-CoA or acyl-ACP.</text>
</comment>
<comment type="catalytic activity">
    <reaction evidence="1">
        <text>an acyl phosphate + sn-glycerol 3-phosphate = a 1-acyl-sn-glycero-3-phosphate + phosphate</text>
        <dbReference type="Rhea" id="RHEA:34075"/>
        <dbReference type="ChEBI" id="CHEBI:43474"/>
        <dbReference type="ChEBI" id="CHEBI:57597"/>
        <dbReference type="ChEBI" id="CHEBI:57970"/>
        <dbReference type="ChEBI" id="CHEBI:59918"/>
        <dbReference type="EC" id="2.3.1.275"/>
    </reaction>
</comment>
<comment type="pathway">
    <text evidence="1">Lipid metabolism; phospholipid metabolism.</text>
</comment>
<comment type="subunit">
    <text evidence="1">Probably interacts with PlsX.</text>
</comment>
<comment type="subcellular location">
    <subcellularLocation>
        <location evidence="1">Cell inner membrane</location>
        <topology evidence="1">Multi-pass membrane protein</topology>
    </subcellularLocation>
</comment>
<comment type="similarity">
    <text evidence="1">Belongs to the PlsY family.</text>
</comment>
<keyword id="KW-0997">Cell inner membrane</keyword>
<keyword id="KW-1003">Cell membrane</keyword>
<keyword id="KW-0444">Lipid biosynthesis</keyword>
<keyword id="KW-0443">Lipid metabolism</keyword>
<keyword id="KW-0472">Membrane</keyword>
<keyword id="KW-0594">Phospholipid biosynthesis</keyword>
<keyword id="KW-1208">Phospholipid metabolism</keyword>
<keyword id="KW-0808">Transferase</keyword>
<keyword id="KW-0812">Transmembrane</keyword>
<keyword id="KW-1133">Transmembrane helix</keyword>
<organism>
    <name type="scientific">Dechloromonas aromatica (strain RCB)</name>
    <dbReference type="NCBI Taxonomy" id="159087"/>
    <lineage>
        <taxon>Bacteria</taxon>
        <taxon>Pseudomonadati</taxon>
        <taxon>Pseudomonadota</taxon>
        <taxon>Betaproteobacteria</taxon>
        <taxon>Rhodocyclales</taxon>
        <taxon>Azonexaceae</taxon>
        <taxon>Dechloromonas</taxon>
    </lineage>
</organism>
<gene>
    <name evidence="1" type="primary">plsY</name>
    <name type="ordered locus">Daro_0533</name>
</gene>
<feature type="chain" id="PRO_0000188349" description="Glycerol-3-phosphate acyltransferase">
    <location>
        <begin position="1"/>
        <end position="198"/>
    </location>
</feature>
<feature type="transmembrane region" description="Helical" evidence="1">
    <location>
        <begin position="1"/>
        <end position="21"/>
    </location>
</feature>
<feature type="transmembrane region" description="Helical" evidence="1">
    <location>
        <begin position="52"/>
        <end position="72"/>
    </location>
</feature>
<feature type="transmembrane region" description="Helical" evidence="1">
    <location>
        <begin position="80"/>
        <end position="100"/>
    </location>
</feature>
<feature type="transmembrane region" description="Helical" evidence="1">
    <location>
        <begin position="112"/>
        <end position="132"/>
    </location>
</feature>
<feature type="transmembrane region" description="Helical" evidence="1">
    <location>
        <begin position="139"/>
        <end position="159"/>
    </location>
</feature>
<feature type="transmembrane region" description="Helical" evidence="1">
    <location>
        <begin position="161"/>
        <end position="181"/>
    </location>
</feature>
<sequence>MQIAIALVAAYLLGSVPFAMISSKLFGLADPRTYGSGNPGATNVLRSGNKKAALVTLIGDALKGWAAVFIAQRMGFSDNVIGLVALAVFLGHLYPIFLKFKGGKGVATAAGVLIALDPMLGLAVAGTWLFMAYAFRYSSLAAVVAAAMAPVISVLMHGGNGQTVVVGILGMALIGKHWQNIQRLMAGQESKIGSKKKA</sequence>
<accession>Q47IP1</accession>
<reference key="1">
    <citation type="journal article" date="2009" name="BMC Genomics">
        <title>Metabolic analysis of the soil microbe Dechloromonas aromatica str. RCB: indications of a surprisingly complex life-style and cryptic anaerobic pathways for aromatic degradation.</title>
        <authorList>
            <person name="Salinero K.K."/>
            <person name="Keller K."/>
            <person name="Feil W.S."/>
            <person name="Feil H."/>
            <person name="Trong S."/>
            <person name="Di Bartolo G."/>
            <person name="Lapidus A."/>
        </authorList>
    </citation>
    <scope>NUCLEOTIDE SEQUENCE [LARGE SCALE GENOMIC DNA]</scope>
    <source>
        <strain>RCB</strain>
    </source>
</reference>
<dbReference type="EC" id="2.3.1.275" evidence="1"/>
<dbReference type="EMBL" id="CP000089">
    <property type="protein sequence ID" value="AAZ45290.1"/>
    <property type="molecule type" value="Genomic_DNA"/>
</dbReference>
<dbReference type="SMR" id="Q47IP1"/>
<dbReference type="STRING" id="159087.Daro_0533"/>
<dbReference type="KEGG" id="dar:Daro_0533"/>
<dbReference type="eggNOG" id="COG0344">
    <property type="taxonomic scope" value="Bacteria"/>
</dbReference>
<dbReference type="HOGENOM" id="CLU_081254_0_0_4"/>
<dbReference type="OrthoDB" id="9777124at2"/>
<dbReference type="UniPathway" id="UPA00085"/>
<dbReference type="GO" id="GO:0005886">
    <property type="term" value="C:plasma membrane"/>
    <property type="evidence" value="ECO:0007669"/>
    <property type="project" value="UniProtKB-SubCell"/>
</dbReference>
<dbReference type="GO" id="GO:0043772">
    <property type="term" value="F:acyl-phosphate glycerol-3-phosphate acyltransferase activity"/>
    <property type="evidence" value="ECO:0007669"/>
    <property type="project" value="UniProtKB-UniRule"/>
</dbReference>
<dbReference type="GO" id="GO:0008654">
    <property type="term" value="P:phospholipid biosynthetic process"/>
    <property type="evidence" value="ECO:0007669"/>
    <property type="project" value="UniProtKB-UniRule"/>
</dbReference>
<dbReference type="HAMAP" id="MF_01043">
    <property type="entry name" value="PlsY"/>
    <property type="match status" value="1"/>
</dbReference>
<dbReference type="InterPro" id="IPR003811">
    <property type="entry name" value="G3P_acylTferase_PlsY"/>
</dbReference>
<dbReference type="NCBIfam" id="TIGR00023">
    <property type="entry name" value="glycerol-3-phosphate 1-O-acyltransferase PlsY"/>
    <property type="match status" value="1"/>
</dbReference>
<dbReference type="PANTHER" id="PTHR30309:SF0">
    <property type="entry name" value="GLYCEROL-3-PHOSPHATE ACYLTRANSFERASE-RELATED"/>
    <property type="match status" value="1"/>
</dbReference>
<dbReference type="PANTHER" id="PTHR30309">
    <property type="entry name" value="INNER MEMBRANE PROTEIN YGIH"/>
    <property type="match status" value="1"/>
</dbReference>
<dbReference type="Pfam" id="PF02660">
    <property type="entry name" value="G3P_acyltransf"/>
    <property type="match status" value="1"/>
</dbReference>
<dbReference type="SMART" id="SM01207">
    <property type="entry name" value="G3P_acyltransf"/>
    <property type="match status" value="1"/>
</dbReference>
<proteinExistence type="inferred from homology"/>